<organism>
    <name type="scientific">Janthinobacterium sp. (strain Marseille)</name>
    <name type="common">Minibacterium massiliensis</name>
    <dbReference type="NCBI Taxonomy" id="375286"/>
    <lineage>
        <taxon>Bacteria</taxon>
        <taxon>Pseudomonadati</taxon>
        <taxon>Pseudomonadota</taxon>
        <taxon>Betaproteobacteria</taxon>
        <taxon>Burkholderiales</taxon>
        <taxon>Oxalobacteraceae</taxon>
        <taxon>Janthinobacterium</taxon>
    </lineage>
</organism>
<comment type="catalytic activity">
    <reaction evidence="1">
        <text>tRNA(Gly) + glycine + ATP = glycyl-tRNA(Gly) + AMP + diphosphate</text>
        <dbReference type="Rhea" id="RHEA:16013"/>
        <dbReference type="Rhea" id="RHEA-COMP:9664"/>
        <dbReference type="Rhea" id="RHEA-COMP:9683"/>
        <dbReference type="ChEBI" id="CHEBI:30616"/>
        <dbReference type="ChEBI" id="CHEBI:33019"/>
        <dbReference type="ChEBI" id="CHEBI:57305"/>
        <dbReference type="ChEBI" id="CHEBI:78442"/>
        <dbReference type="ChEBI" id="CHEBI:78522"/>
        <dbReference type="ChEBI" id="CHEBI:456215"/>
        <dbReference type="EC" id="6.1.1.14"/>
    </reaction>
</comment>
<comment type="subunit">
    <text evidence="1">Tetramer of two alpha and two beta subunits.</text>
</comment>
<comment type="subcellular location">
    <subcellularLocation>
        <location evidence="1">Cytoplasm</location>
    </subcellularLocation>
</comment>
<comment type="similarity">
    <text evidence="1">Belongs to the class-II aminoacyl-tRNA synthetase family.</text>
</comment>
<feature type="chain" id="PRO_1000047434" description="Glycine--tRNA ligase alpha subunit">
    <location>
        <begin position="1"/>
        <end position="305"/>
    </location>
</feature>
<protein>
    <recommendedName>
        <fullName evidence="1">Glycine--tRNA ligase alpha subunit</fullName>
        <ecNumber evidence="1">6.1.1.14</ecNumber>
    </recommendedName>
    <alternativeName>
        <fullName evidence="1">Glycyl-tRNA synthetase alpha subunit</fullName>
        <shortName evidence="1">GlyRS</shortName>
    </alternativeName>
</protein>
<reference key="1">
    <citation type="journal article" date="2007" name="PLoS Genet.">
        <title>Genome analysis of Minibacterium massiliensis highlights the convergent evolution of water-living bacteria.</title>
        <authorList>
            <person name="Audic S."/>
            <person name="Robert C."/>
            <person name="Campagna B."/>
            <person name="Parinello H."/>
            <person name="Claverie J.-M."/>
            <person name="Raoult D."/>
            <person name="Drancourt M."/>
        </authorList>
    </citation>
    <scope>NUCLEOTIDE SEQUENCE [LARGE SCALE GENOMIC DNA]</scope>
    <source>
        <strain>Marseille</strain>
    </source>
</reference>
<evidence type="ECO:0000255" key="1">
    <source>
        <dbReference type="HAMAP-Rule" id="MF_00254"/>
    </source>
</evidence>
<proteinExistence type="inferred from homology"/>
<dbReference type="EC" id="6.1.1.14" evidence="1"/>
<dbReference type="EMBL" id="CP000269">
    <property type="protein sequence ID" value="ABR91949.1"/>
    <property type="molecule type" value="Genomic_DNA"/>
</dbReference>
<dbReference type="RefSeq" id="WP_012078291.1">
    <property type="nucleotide sequence ID" value="NC_009659.1"/>
</dbReference>
<dbReference type="SMR" id="A6SV19"/>
<dbReference type="STRING" id="375286.mma_0426"/>
<dbReference type="KEGG" id="mms:mma_0426"/>
<dbReference type="eggNOG" id="COG0752">
    <property type="taxonomic scope" value="Bacteria"/>
</dbReference>
<dbReference type="HOGENOM" id="CLU_057066_1_0_4"/>
<dbReference type="OrthoDB" id="9802183at2"/>
<dbReference type="Proteomes" id="UP000006388">
    <property type="component" value="Chromosome"/>
</dbReference>
<dbReference type="GO" id="GO:0005829">
    <property type="term" value="C:cytosol"/>
    <property type="evidence" value="ECO:0007669"/>
    <property type="project" value="TreeGrafter"/>
</dbReference>
<dbReference type="GO" id="GO:0005524">
    <property type="term" value="F:ATP binding"/>
    <property type="evidence" value="ECO:0007669"/>
    <property type="project" value="UniProtKB-UniRule"/>
</dbReference>
<dbReference type="GO" id="GO:0004820">
    <property type="term" value="F:glycine-tRNA ligase activity"/>
    <property type="evidence" value="ECO:0007669"/>
    <property type="project" value="UniProtKB-UniRule"/>
</dbReference>
<dbReference type="GO" id="GO:0006426">
    <property type="term" value="P:glycyl-tRNA aminoacylation"/>
    <property type="evidence" value="ECO:0007669"/>
    <property type="project" value="UniProtKB-UniRule"/>
</dbReference>
<dbReference type="CDD" id="cd00733">
    <property type="entry name" value="GlyRS_alpha_core"/>
    <property type="match status" value="1"/>
</dbReference>
<dbReference type="FunFam" id="3.30.930.10:FF:000006">
    <property type="entry name" value="Glycine--tRNA ligase alpha subunit"/>
    <property type="match status" value="1"/>
</dbReference>
<dbReference type="Gene3D" id="3.30.930.10">
    <property type="entry name" value="Bira Bifunctional Protein, Domain 2"/>
    <property type="match status" value="1"/>
</dbReference>
<dbReference type="Gene3D" id="1.20.58.180">
    <property type="entry name" value="Class II aaRS and biotin synthetases, domain 2"/>
    <property type="match status" value="1"/>
</dbReference>
<dbReference type="HAMAP" id="MF_00254">
    <property type="entry name" value="Gly_tRNA_synth_alpha"/>
    <property type="match status" value="1"/>
</dbReference>
<dbReference type="InterPro" id="IPR045864">
    <property type="entry name" value="aa-tRNA-synth_II/BPL/LPL"/>
</dbReference>
<dbReference type="InterPro" id="IPR006194">
    <property type="entry name" value="Gly-tRNA-synth_heterodimer"/>
</dbReference>
<dbReference type="InterPro" id="IPR002310">
    <property type="entry name" value="Gly-tRNA_ligase_asu"/>
</dbReference>
<dbReference type="NCBIfam" id="TIGR00388">
    <property type="entry name" value="glyQ"/>
    <property type="match status" value="1"/>
</dbReference>
<dbReference type="NCBIfam" id="NF006827">
    <property type="entry name" value="PRK09348.1"/>
    <property type="match status" value="1"/>
</dbReference>
<dbReference type="PANTHER" id="PTHR30075:SF2">
    <property type="entry name" value="GLYCINE--TRNA LIGASE, CHLOROPLASTIC_MITOCHONDRIAL 2"/>
    <property type="match status" value="1"/>
</dbReference>
<dbReference type="PANTHER" id="PTHR30075">
    <property type="entry name" value="GLYCYL-TRNA SYNTHETASE"/>
    <property type="match status" value="1"/>
</dbReference>
<dbReference type="Pfam" id="PF02091">
    <property type="entry name" value="tRNA-synt_2e"/>
    <property type="match status" value="1"/>
</dbReference>
<dbReference type="PRINTS" id="PR01044">
    <property type="entry name" value="TRNASYNTHGA"/>
</dbReference>
<dbReference type="SUPFAM" id="SSF55681">
    <property type="entry name" value="Class II aaRS and biotin synthetases"/>
    <property type="match status" value="1"/>
</dbReference>
<dbReference type="PROSITE" id="PS50861">
    <property type="entry name" value="AA_TRNA_LIGASE_II_GLYAB"/>
    <property type="match status" value="1"/>
</dbReference>
<keyword id="KW-0030">Aminoacyl-tRNA synthetase</keyword>
<keyword id="KW-0067">ATP-binding</keyword>
<keyword id="KW-0963">Cytoplasm</keyword>
<keyword id="KW-0436">Ligase</keyword>
<keyword id="KW-0547">Nucleotide-binding</keyword>
<keyword id="KW-0648">Protein biosynthesis</keyword>
<gene>
    <name evidence="1" type="primary">glyQ</name>
    <name type="ordered locus">mma_0426</name>
</gene>
<name>SYGA_JANMA</name>
<accession>A6SV19</accession>
<sequence>MLTFQQIILTLQKYWDAQGCALLQPYDMEVGAGTSHTATFLRAIGPEPWRAAYVQPSRRPKDGRYGENPNRLQHYYQYQVVLKPAPANILELYLGSLEALGFDLKANDIRFVEDDWENPTLGAWGLGWEVWLNGMEVTQFTYFQQVGGINCKPITGEITYGLERLAMYLQGVDNVYDLRWTDKLSYGDVYKQNEIEQSTYNFEHSDADFLFTAFGAHEKQALNLIDNKLALPAYEQVLKAAHTFNLLDARGAISVTERAAYIGRIRNLARSVARSYLDSRARLGFPMAKPEHAAEVLAQIEKEAA</sequence>